<protein>
    <recommendedName>
        <fullName evidence="1">Phospho-N-acetylmuramoyl-pentapeptide-transferase</fullName>
        <ecNumber evidence="1">2.7.8.13</ecNumber>
    </recommendedName>
    <alternativeName>
        <fullName evidence="1">UDP-MurNAc-pentapeptide phosphotransferase</fullName>
    </alternativeName>
</protein>
<dbReference type="EC" id="2.7.8.13" evidence="1"/>
<dbReference type="EMBL" id="CP000903">
    <property type="protein sequence ID" value="ABY44909.1"/>
    <property type="molecule type" value="Genomic_DNA"/>
</dbReference>
<dbReference type="RefSeq" id="WP_002014738.1">
    <property type="nucleotide sequence ID" value="NZ_CAKMRX030000111.1"/>
</dbReference>
<dbReference type="SMR" id="A9VU75"/>
<dbReference type="GeneID" id="66266520"/>
<dbReference type="KEGG" id="bwe:BcerKBAB4_3740"/>
<dbReference type="eggNOG" id="COG0472">
    <property type="taxonomic scope" value="Bacteria"/>
</dbReference>
<dbReference type="HOGENOM" id="CLU_023982_0_1_9"/>
<dbReference type="UniPathway" id="UPA00219"/>
<dbReference type="Proteomes" id="UP000002154">
    <property type="component" value="Chromosome"/>
</dbReference>
<dbReference type="GO" id="GO:0005886">
    <property type="term" value="C:plasma membrane"/>
    <property type="evidence" value="ECO:0007669"/>
    <property type="project" value="UniProtKB-SubCell"/>
</dbReference>
<dbReference type="GO" id="GO:0046872">
    <property type="term" value="F:metal ion binding"/>
    <property type="evidence" value="ECO:0007669"/>
    <property type="project" value="UniProtKB-KW"/>
</dbReference>
<dbReference type="GO" id="GO:0008963">
    <property type="term" value="F:phospho-N-acetylmuramoyl-pentapeptide-transferase activity"/>
    <property type="evidence" value="ECO:0007669"/>
    <property type="project" value="UniProtKB-UniRule"/>
</dbReference>
<dbReference type="GO" id="GO:0051992">
    <property type="term" value="F:UDP-N-acetylmuramoyl-L-alanyl-D-glutamyl-meso-2,6-diaminopimelyl-D-alanyl-D-alanine:undecaprenyl-phosphate transferase activity"/>
    <property type="evidence" value="ECO:0007669"/>
    <property type="project" value="RHEA"/>
</dbReference>
<dbReference type="GO" id="GO:0051301">
    <property type="term" value="P:cell division"/>
    <property type="evidence" value="ECO:0007669"/>
    <property type="project" value="UniProtKB-KW"/>
</dbReference>
<dbReference type="GO" id="GO:0071555">
    <property type="term" value="P:cell wall organization"/>
    <property type="evidence" value="ECO:0007669"/>
    <property type="project" value="UniProtKB-KW"/>
</dbReference>
<dbReference type="GO" id="GO:0009252">
    <property type="term" value="P:peptidoglycan biosynthetic process"/>
    <property type="evidence" value="ECO:0007669"/>
    <property type="project" value="UniProtKB-UniRule"/>
</dbReference>
<dbReference type="GO" id="GO:0008360">
    <property type="term" value="P:regulation of cell shape"/>
    <property type="evidence" value="ECO:0007669"/>
    <property type="project" value="UniProtKB-KW"/>
</dbReference>
<dbReference type="CDD" id="cd06852">
    <property type="entry name" value="GT_MraY"/>
    <property type="match status" value="1"/>
</dbReference>
<dbReference type="HAMAP" id="MF_00038">
    <property type="entry name" value="MraY"/>
    <property type="match status" value="1"/>
</dbReference>
<dbReference type="InterPro" id="IPR000715">
    <property type="entry name" value="Glycosyl_transferase_4"/>
</dbReference>
<dbReference type="InterPro" id="IPR003524">
    <property type="entry name" value="PNAcMuramoyl-5peptid_Trfase"/>
</dbReference>
<dbReference type="InterPro" id="IPR018480">
    <property type="entry name" value="PNAcMuramoyl-5peptid_Trfase_CS"/>
</dbReference>
<dbReference type="NCBIfam" id="TIGR00445">
    <property type="entry name" value="mraY"/>
    <property type="match status" value="1"/>
</dbReference>
<dbReference type="PANTHER" id="PTHR22926">
    <property type="entry name" value="PHOSPHO-N-ACETYLMURAMOYL-PENTAPEPTIDE-TRANSFERASE"/>
    <property type="match status" value="1"/>
</dbReference>
<dbReference type="PANTHER" id="PTHR22926:SF5">
    <property type="entry name" value="PHOSPHO-N-ACETYLMURAMOYL-PENTAPEPTIDE-TRANSFERASE HOMOLOG"/>
    <property type="match status" value="1"/>
</dbReference>
<dbReference type="Pfam" id="PF00953">
    <property type="entry name" value="Glycos_transf_4"/>
    <property type="match status" value="1"/>
</dbReference>
<dbReference type="Pfam" id="PF10555">
    <property type="entry name" value="MraY_sig1"/>
    <property type="match status" value="1"/>
</dbReference>
<dbReference type="PROSITE" id="PS01348">
    <property type="entry name" value="MRAY_2"/>
    <property type="match status" value="1"/>
</dbReference>
<organism>
    <name type="scientific">Bacillus mycoides (strain KBAB4)</name>
    <name type="common">Bacillus weihenstephanensis</name>
    <dbReference type="NCBI Taxonomy" id="315730"/>
    <lineage>
        <taxon>Bacteria</taxon>
        <taxon>Bacillati</taxon>
        <taxon>Bacillota</taxon>
        <taxon>Bacilli</taxon>
        <taxon>Bacillales</taxon>
        <taxon>Bacillaceae</taxon>
        <taxon>Bacillus</taxon>
        <taxon>Bacillus cereus group</taxon>
    </lineage>
</organism>
<evidence type="ECO:0000255" key="1">
    <source>
        <dbReference type="HAMAP-Rule" id="MF_00038"/>
    </source>
</evidence>
<reference key="1">
    <citation type="journal article" date="2008" name="Chem. Biol. Interact.">
        <title>Extending the Bacillus cereus group genomics to putative food-borne pathogens of different toxicity.</title>
        <authorList>
            <person name="Lapidus A."/>
            <person name="Goltsman E."/>
            <person name="Auger S."/>
            <person name="Galleron N."/>
            <person name="Segurens B."/>
            <person name="Dossat C."/>
            <person name="Land M.L."/>
            <person name="Broussolle V."/>
            <person name="Brillard J."/>
            <person name="Guinebretiere M.-H."/>
            <person name="Sanchis V."/>
            <person name="Nguen-the C."/>
            <person name="Lereclus D."/>
            <person name="Richardson P."/>
            <person name="Wincker P."/>
            <person name="Weissenbach J."/>
            <person name="Ehrlich S.D."/>
            <person name="Sorokin A."/>
        </authorList>
    </citation>
    <scope>NUCLEOTIDE SEQUENCE [LARGE SCALE GENOMIC DNA]</scope>
    <source>
        <strain>KBAB4</strain>
    </source>
</reference>
<name>MRAY_BACMK</name>
<sequence>MLEQGLLVTAGVAFLISVALSPLFIPFLRKLKFGQSIRDEGPKSHQKKSGTPTMGGIVIYVSMMVTTLIMAIKFNNLGAEVSLLLLVTFGYGLIGFLDDYIKVVKKRNLGLTSKQKLIGQLVIAIAFFLIGKGQAFHTYIMIPGTDVKFELGWAYFVLVLFMLIGGSNAVNLTDGLDGLLSGTAAIAFGAFSIIAVAQEQFGVAIFCMAVVGAVLGFLVFNANPAKVFMGDTGSLALGGAIAAVAILLKQELLLVIIGGVFVAETLSVIIQVISFKTTGKRVFKMSPLHHHYELCGWSEWRVVVTFWSVGFLLAVLGIYIGVWM</sequence>
<accession>A9VU75</accession>
<comment type="function">
    <text evidence="1">Catalyzes the initial step of the lipid cycle reactions in the biosynthesis of the cell wall peptidoglycan: transfers peptidoglycan precursor phospho-MurNAc-pentapeptide from UDP-MurNAc-pentapeptide onto the lipid carrier undecaprenyl phosphate, yielding undecaprenyl-pyrophosphoryl-MurNAc-pentapeptide, known as lipid I.</text>
</comment>
<comment type="catalytic activity">
    <reaction evidence="1">
        <text>UDP-N-acetyl-alpha-D-muramoyl-L-alanyl-gamma-D-glutamyl-meso-2,6-diaminopimeloyl-D-alanyl-D-alanine + di-trans,octa-cis-undecaprenyl phosphate = di-trans,octa-cis-undecaprenyl diphospho-N-acetyl-alpha-D-muramoyl-L-alanyl-D-glutamyl-meso-2,6-diaminopimeloyl-D-alanyl-D-alanine + UMP</text>
        <dbReference type="Rhea" id="RHEA:28386"/>
        <dbReference type="ChEBI" id="CHEBI:57865"/>
        <dbReference type="ChEBI" id="CHEBI:60392"/>
        <dbReference type="ChEBI" id="CHEBI:61386"/>
        <dbReference type="ChEBI" id="CHEBI:61387"/>
        <dbReference type="EC" id="2.7.8.13"/>
    </reaction>
</comment>
<comment type="cofactor">
    <cofactor evidence="1">
        <name>Mg(2+)</name>
        <dbReference type="ChEBI" id="CHEBI:18420"/>
    </cofactor>
</comment>
<comment type="pathway">
    <text evidence="1">Cell wall biogenesis; peptidoglycan biosynthesis.</text>
</comment>
<comment type="subcellular location">
    <subcellularLocation>
        <location evidence="1">Cell membrane</location>
        <topology evidence="1">Multi-pass membrane protein</topology>
    </subcellularLocation>
</comment>
<comment type="similarity">
    <text evidence="1">Belongs to the glycosyltransferase 4 family. MraY subfamily.</text>
</comment>
<gene>
    <name evidence="1" type="primary">mraY</name>
    <name type="ordered locus">BcerKBAB4_3740</name>
</gene>
<feature type="chain" id="PRO_1000090591" description="Phospho-N-acetylmuramoyl-pentapeptide-transferase">
    <location>
        <begin position="1"/>
        <end position="324"/>
    </location>
</feature>
<feature type="transmembrane region" description="Helical" evidence="1">
    <location>
        <begin position="5"/>
        <end position="25"/>
    </location>
</feature>
<feature type="transmembrane region" description="Helical" evidence="1">
    <location>
        <begin position="52"/>
        <end position="72"/>
    </location>
</feature>
<feature type="transmembrane region" description="Helical" evidence="1">
    <location>
        <begin position="77"/>
        <end position="97"/>
    </location>
</feature>
<feature type="transmembrane region" description="Helical" evidence="1">
    <location>
        <begin position="122"/>
        <end position="142"/>
    </location>
</feature>
<feature type="transmembrane region" description="Helical" evidence="1">
    <location>
        <begin position="149"/>
        <end position="169"/>
    </location>
</feature>
<feature type="transmembrane region" description="Helical" evidence="1">
    <location>
        <begin position="176"/>
        <end position="196"/>
    </location>
</feature>
<feature type="transmembrane region" description="Helical" evidence="1">
    <location>
        <begin position="201"/>
        <end position="221"/>
    </location>
</feature>
<feature type="transmembrane region" description="Helical" evidence="1">
    <location>
        <begin position="227"/>
        <end position="247"/>
    </location>
</feature>
<feature type="transmembrane region" description="Helical" evidence="1">
    <location>
        <begin position="253"/>
        <end position="273"/>
    </location>
</feature>
<feature type="transmembrane region" description="Helical" evidence="1">
    <location>
        <begin position="302"/>
        <end position="322"/>
    </location>
</feature>
<keyword id="KW-0131">Cell cycle</keyword>
<keyword id="KW-0132">Cell division</keyword>
<keyword id="KW-1003">Cell membrane</keyword>
<keyword id="KW-0133">Cell shape</keyword>
<keyword id="KW-0961">Cell wall biogenesis/degradation</keyword>
<keyword id="KW-0460">Magnesium</keyword>
<keyword id="KW-0472">Membrane</keyword>
<keyword id="KW-0479">Metal-binding</keyword>
<keyword id="KW-0573">Peptidoglycan synthesis</keyword>
<keyword id="KW-0808">Transferase</keyword>
<keyword id="KW-0812">Transmembrane</keyword>
<keyword id="KW-1133">Transmembrane helix</keyword>
<proteinExistence type="inferred from homology"/>